<dbReference type="EC" id="1.1.1.37" evidence="1"/>
<dbReference type="EMBL" id="CP000852">
    <property type="protein sequence ID" value="ABW02498.1"/>
    <property type="molecule type" value="Genomic_DNA"/>
</dbReference>
<dbReference type="RefSeq" id="WP_012186717.1">
    <property type="nucleotide sequence ID" value="NC_009954.1"/>
</dbReference>
<dbReference type="SMR" id="A8MAC1"/>
<dbReference type="STRING" id="397948.Cmaq_1675"/>
<dbReference type="GeneID" id="5708826"/>
<dbReference type="KEGG" id="cma:Cmaq_1675"/>
<dbReference type="eggNOG" id="arCOG00246">
    <property type="taxonomic scope" value="Archaea"/>
</dbReference>
<dbReference type="HOGENOM" id="CLU_045401_2_1_2"/>
<dbReference type="OrthoDB" id="2596at2157"/>
<dbReference type="Proteomes" id="UP000001137">
    <property type="component" value="Chromosome"/>
</dbReference>
<dbReference type="GO" id="GO:0004459">
    <property type="term" value="F:L-lactate dehydrogenase activity"/>
    <property type="evidence" value="ECO:0007669"/>
    <property type="project" value="TreeGrafter"/>
</dbReference>
<dbReference type="GO" id="GO:0030060">
    <property type="term" value="F:L-malate dehydrogenase (NAD+) activity"/>
    <property type="evidence" value="ECO:0007669"/>
    <property type="project" value="UniProtKB-EC"/>
</dbReference>
<dbReference type="GO" id="GO:0006089">
    <property type="term" value="P:lactate metabolic process"/>
    <property type="evidence" value="ECO:0007669"/>
    <property type="project" value="TreeGrafter"/>
</dbReference>
<dbReference type="GO" id="GO:0006099">
    <property type="term" value="P:tricarboxylic acid cycle"/>
    <property type="evidence" value="ECO:0007669"/>
    <property type="project" value="UniProtKB-KW"/>
</dbReference>
<dbReference type="CDD" id="cd01339">
    <property type="entry name" value="LDH-like_MDH"/>
    <property type="match status" value="1"/>
</dbReference>
<dbReference type="FunFam" id="3.40.50.720:FF:000018">
    <property type="entry name" value="Malate dehydrogenase"/>
    <property type="match status" value="1"/>
</dbReference>
<dbReference type="Gene3D" id="3.90.110.10">
    <property type="entry name" value="Lactate dehydrogenase/glycoside hydrolase, family 4, C-terminal"/>
    <property type="match status" value="1"/>
</dbReference>
<dbReference type="Gene3D" id="3.40.50.720">
    <property type="entry name" value="NAD(P)-binding Rossmann-like Domain"/>
    <property type="match status" value="1"/>
</dbReference>
<dbReference type="InterPro" id="IPR001557">
    <property type="entry name" value="L-lactate/malate_DH"/>
</dbReference>
<dbReference type="InterPro" id="IPR022383">
    <property type="entry name" value="Lactate/malate_DH_C"/>
</dbReference>
<dbReference type="InterPro" id="IPR001236">
    <property type="entry name" value="Lactate/malate_DH_N"/>
</dbReference>
<dbReference type="InterPro" id="IPR015955">
    <property type="entry name" value="Lactate_DH/Glyco_Ohase_4_C"/>
</dbReference>
<dbReference type="InterPro" id="IPR011275">
    <property type="entry name" value="Malate_DH_type3"/>
</dbReference>
<dbReference type="InterPro" id="IPR036291">
    <property type="entry name" value="NAD(P)-bd_dom_sf"/>
</dbReference>
<dbReference type="NCBIfam" id="NF004863">
    <property type="entry name" value="PRK06223.1"/>
    <property type="match status" value="1"/>
</dbReference>
<dbReference type="PANTHER" id="PTHR43128">
    <property type="entry name" value="L-2-HYDROXYCARBOXYLATE DEHYDROGENASE (NAD(P)(+))"/>
    <property type="match status" value="1"/>
</dbReference>
<dbReference type="PANTHER" id="PTHR43128:SF16">
    <property type="entry name" value="L-LACTATE DEHYDROGENASE"/>
    <property type="match status" value="1"/>
</dbReference>
<dbReference type="Pfam" id="PF02866">
    <property type="entry name" value="Ldh_1_C"/>
    <property type="match status" value="1"/>
</dbReference>
<dbReference type="Pfam" id="PF00056">
    <property type="entry name" value="Ldh_1_N"/>
    <property type="match status" value="1"/>
</dbReference>
<dbReference type="PIRSF" id="PIRSF000102">
    <property type="entry name" value="Lac_mal_DH"/>
    <property type="match status" value="1"/>
</dbReference>
<dbReference type="PRINTS" id="PR00086">
    <property type="entry name" value="LLDHDRGNASE"/>
</dbReference>
<dbReference type="SUPFAM" id="SSF56327">
    <property type="entry name" value="LDH C-terminal domain-like"/>
    <property type="match status" value="1"/>
</dbReference>
<dbReference type="SUPFAM" id="SSF51735">
    <property type="entry name" value="NAD(P)-binding Rossmann-fold domains"/>
    <property type="match status" value="1"/>
</dbReference>
<accession>A8MAC1</accession>
<evidence type="ECO:0000250" key="1">
    <source>
        <dbReference type="UniProtKB" id="O08349"/>
    </source>
</evidence>
<evidence type="ECO:0000250" key="2">
    <source>
        <dbReference type="UniProtKB" id="P61889"/>
    </source>
</evidence>
<evidence type="ECO:0000305" key="3"/>
<reference key="1">
    <citation type="submission" date="2007-10" db="EMBL/GenBank/DDBJ databases">
        <title>Complete sequence of Caldivirga maquilingensis IC-167.</title>
        <authorList>
            <consortium name="US DOE Joint Genome Institute"/>
            <person name="Copeland A."/>
            <person name="Lucas S."/>
            <person name="Lapidus A."/>
            <person name="Barry K."/>
            <person name="Glavina del Rio T."/>
            <person name="Dalin E."/>
            <person name="Tice H."/>
            <person name="Pitluck S."/>
            <person name="Saunders E."/>
            <person name="Brettin T."/>
            <person name="Bruce D."/>
            <person name="Detter J.C."/>
            <person name="Han C."/>
            <person name="Schmutz J."/>
            <person name="Larimer F."/>
            <person name="Land M."/>
            <person name="Hauser L."/>
            <person name="Kyrpides N."/>
            <person name="Ivanova N."/>
            <person name="Biddle J.F."/>
            <person name="Zhang Z."/>
            <person name="Fitz-Gibbon S.T."/>
            <person name="Lowe T.M."/>
            <person name="Saltikov C."/>
            <person name="House C.H."/>
            <person name="Richardson P."/>
        </authorList>
    </citation>
    <scope>NUCLEOTIDE SEQUENCE [LARGE SCALE GENOMIC DNA]</scope>
    <source>
        <strain>ATCC 700844 / DSM 13496 / JCM 10307 / IC-167</strain>
    </source>
</reference>
<gene>
    <name type="primary">mdh</name>
    <name type="ordered locus">Cmaq_1675</name>
</gene>
<keyword id="KW-0520">NAD</keyword>
<keyword id="KW-0560">Oxidoreductase</keyword>
<keyword id="KW-1185">Reference proteome</keyword>
<keyword id="KW-0816">Tricarboxylic acid cycle</keyword>
<name>MDH_CALMQ</name>
<sequence length="309" mass="33909">MITIVGSGRVGATTAAFLMFYELDNEVTLIDVIKGLPQGEALDLNHAAAILGKSVRYKGSNDYKDMEGSDIVIVTAGLARKPGMTREELAGKNAEIISSIADQIKKYAPNSIVIITTNPLDAMVYVLYKRLGFPRNRVIGFSGVLDSNRMAYYASQIIGIAPESIIPVVLGQHGENMYPVPEASFVYGKPLTEFLTQEQYNDIVKKTIQAGADITNLRGFSSNWGPAAGLALMVDSIKKNRRRVFEASVYLDGEYGVKDVFAEVPVVLGKNGVEKIIELNLTPEQRQKFMQSIEAVKKNLTQVPPQYLK</sequence>
<organism>
    <name type="scientific">Caldivirga maquilingensis (strain ATCC 700844 / DSM 13496 / JCM 10307 / IC-167)</name>
    <dbReference type="NCBI Taxonomy" id="397948"/>
    <lineage>
        <taxon>Archaea</taxon>
        <taxon>Thermoproteota</taxon>
        <taxon>Thermoprotei</taxon>
        <taxon>Thermoproteales</taxon>
        <taxon>Thermoproteaceae</taxon>
        <taxon>Caldivirga</taxon>
    </lineage>
</organism>
<proteinExistence type="inferred from homology"/>
<comment type="function">
    <text evidence="1">Catalyzes the reversible oxidation of malate to oxaloacetate.</text>
</comment>
<comment type="catalytic activity">
    <reaction evidence="1">
        <text>(S)-malate + NAD(+) = oxaloacetate + NADH + H(+)</text>
        <dbReference type="Rhea" id="RHEA:21432"/>
        <dbReference type="ChEBI" id="CHEBI:15378"/>
        <dbReference type="ChEBI" id="CHEBI:15589"/>
        <dbReference type="ChEBI" id="CHEBI:16452"/>
        <dbReference type="ChEBI" id="CHEBI:57540"/>
        <dbReference type="ChEBI" id="CHEBI:57945"/>
        <dbReference type="EC" id="1.1.1.37"/>
    </reaction>
</comment>
<comment type="similarity">
    <text evidence="3">Belongs to the LDH/MDH superfamily.</text>
</comment>
<feature type="chain" id="PRO_1000081356" description="Malate dehydrogenase">
    <location>
        <begin position="1"/>
        <end position="309"/>
    </location>
</feature>
<feature type="active site" description="Proton acceptor" evidence="2">
    <location>
        <position position="173"/>
    </location>
</feature>
<feature type="binding site" evidence="1">
    <location>
        <begin position="6"/>
        <end position="11"/>
    </location>
    <ligand>
        <name>NAD(+)</name>
        <dbReference type="ChEBI" id="CHEBI:57540"/>
    </ligand>
</feature>
<feature type="binding site" evidence="1">
    <location>
        <position position="31"/>
    </location>
    <ligand>
        <name>NAD(+)</name>
        <dbReference type="ChEBI" id="CHEBI:57540"/>
    </ligand>
</feature>
<feature type="binding site" evidence="2">
    <location>
        <position position="80"/>
    </location>
    <ligand>
        <name>substrate</name>
    </ligand>
</feature>
<feature type="binding site" evidence="2">
    <location>
        <position position="86"/>
    </location>
    <ligand>
        <name>substrate</name>
    </ligand>
</feature>
<feature type="binding site" evidence="1">
    <location>
        <position position="93"/>
    </location>
    <ligand>
        <name>NAD(+)</name>
        <dbReference type="ChEBI" id="CHEBI:57540"/>
    </ligand>
</feature>
<feature type="binding site" evidence="1">
    <location>
        <begin position="116"/>
        <end position="118"/>
    </location>
    <ligand>
        <name>NAD(+)</name>
        <dbReference type="ChEBI" id="CHEBI:57540"/>
    </ligand>
</feature>
<feature type="binding site" evidence="2">
    <location>
        <position position="118"/>
    </location>
    <ligand>
        <name>substrate</name>
    </ligand>
</feature>
<feature type="binding site" evidence="2">
    <location>
        <position position="149"/>
    </location>
    <ligand>
        <name>substrate</name>
    </ligand>
</feature>
<protein>
    <recommendedName>
        <fullName evidence="1">Malate dehydrogenase</fullName>
        <ecNumber evidence="1">1.1.1.37</ecNumber>
    </recommendedName>
</protein>